<gene>
    <name evidence="6" type="primary">pepB</name>
</gene>
<keyword id="KW-0064">Aspartyl protease</keyword>
<keyword id="KW-1015">Disulfide bond</keyword>
<keyword id="KW-0378">Hydrolase</keyword>
<keyword id="KW-0645">Protease</keyword>
<keyword id="KW-0964">Secreted</keyword>
<keyword id="KW-0732">Signal</keyword>
<keyword id="KW-0865">Zymogen</keyword>
<feature type="signal peptide" evidence="4">
    <location>
        <begin position="1"/>
        <end position="20"/>
    </location>
</feature>
<feature type="propeptide" id="PRO_0000407056" description="Activation peptide" evidence="3">
    <location>
        <begin position="21"/>
        <end position="70"/>
    </location>
</feature>
<feature type="chain" id="PRO_5000058618" description="Penicillopepsin-3">
    <location>
        <begin position="71"/>
        <end position="394"/>
    </location>
</feature>
<feature type="domain" description="Peptidase A1" evidence="5">
    <location>
        <begin position="87"/>
        <end position="392"/>
    </location>
</feature>
<feature type="active site" evidence="5">
    <location>
        <position position="103"/>
    </location>
</feature>
<feature type="active site" evidence="5">
    <location>
        <position position="284"/>
    </location>
</feature>
<feature type="disulfide bond" evidence="5">
    <location>
        <begin position="320"/>
        <end position="355"/>
    </location>
</feature>
<comment type="function">
    <text evidence="1">Secreted aspartic endopeptidase that allows assimilation of proteinaceous substrates. The scissile peptide bond is attacked by a nucleophilic water molecule activated by two aspartic residues in the active site. Shows a broad primary substrate specificity. Favors hydrophobic residues at the P1 and P1' positions, but can also activate trypsinogen and hydrolyze the B chain of insulin between positions 'Gly-20' and 'Glu-21'.</text>
</comment>
<comment type="catalytic activity">
    <reaction evidence="1">
        <text>Hydrolysis of proteins with broad specificity similar to that of pepsin A, preferring hydrophobic residues at P1 and P1', but also cleaving 20-Gly-|-Glu-21 in the B chain of insulin. Clots milk, and activates trypsinogen.</text>
        <dbReference type="EC" id="3.4.23.20"/>
    </reaction>
</comment>
<comment type="subunit">
    <text evidence="3">Monomer.</text>
</comment>
<comment type="subcellular location">
    <subcellularLocation>
        <location evidence="2">Secreted</location>
    </subcellularLocation>
</comment>
<comment type="similarity">
    <text evidence="5">Belongs to the peptidase A1 family.</text>
</comment>
<proteinExistence type="inferred from homology"/>
<organism>
    <name type="scientific">Penicillium janthinellum</name>
    <name type="common">Penicillium vitale</name>
    <dbReference type="NCBI Taxonomy" id="5079"/>
    <lineage>
        <taxon>Eukaryota</taxon>
        <taxon>Fungi</taxon>
        <taxon>Dikarya</taxon>
        <taxon>Ascomycota</taxon>
        <taxon>Pezizomycotina</taxon>
        <taxon>Eurotiomycetes</taxon>
        <taxon>Eurotiomycetidae</taxon>
        <taxon>Eurotiales</taxon>
        <taxon>Aspergillaceae</taxon>
        <taxon>Penicillium</taxon>
    </lineage>
</organism>
<name>PEPA3_PENJA</name>
<protein>
    <recommendedName>
        <fullName evidence="7">Penicillopepsin-3</fullName>
        <ecNumber evidence="1">3.4.23.20</ecNumber>
    </recommendedName>
    <alternativeName>
        <fullName>Aspartic protease pepB</fullName>
    </alternativeName>
    <alternativeName>
        <fullName evidence="6">Propenicillopepsin-JT3</fullName>
    </alternativeName>
</protein>
<evidence type="ECO:0000250" key="1">
    <source>
        <dbReference type="UniProtKB" id="P00798"/>
    </source>
</evidence>
<evidence type="ECO:0000250" key="2">
    <source>
        <dbReference type="UniProtKB" id="Q01972"/>
    </source>
</evidence>
<evidence type="ECO:0000250" key="3">
    <source>
        <dbReference type="UniProtKB" id="Q12567"/>
    </source>
</evidence>
<evidence type="ECO:0000255" key="4"/>
<evidence type="ECO:0000255" key="5">
    <source>
        <dbReference type="PROSITE-ProRule" id="PRU01103"/>
    </source>
</evidence>
<evidence type="ECO:0000303" key="6">
    <source ref="1"/>
</evidence>
<evidence type="ECO:0000305" key="7"/>
<dbReference type="EC" id="3.4.23.20" evidence="1"/>
<dbReference type="EMBL" id="AF295432">
    <property type="protein sequence ID" value="AAG34660.1"/>
    <property type="molecule type" value="Genomic_DNA"/>
</dbReference>
<dbReference type="SMR" id="Q9HEZ3"/>
<dbReference type="BRENDA" id="3.4.23.20">
    <property type="organism ID" value="4621"/>
</dbReference>
<dbReference type="GO" id="GO:0005576">
    <property type="term" value="C:extracellular region"/>
    <property type="evidence" value="ECO:0007669"/>
    <property type="project" value="UniProtKB-SubCell"/>
</dbReference>
<dbReference type="GO" id="GO:0004190">
    <property type="term" value="F:aspartic-type endopeptidase activity"/>
    <property type="evidence" value="ECO:0007669"/>
    <property type="project" value="UniProtKB-KW"/>
</dbReference>
<dbReference type="GO" id="GO:0006508">
    <property type="term" value="P:proteolysis"/>
    <property type="evidence" value="ECO:0007669"/>
    <property type="project" value="UniProtKB-KW"/>
</dbReference>
<dbReference type="CDD" id="cd06097">
    <property type="entry name" value="Aspergillopepsin_like"/>
    <property type="match status" value="1"/>
</dbReference>
<dbReference type="FunFam" id="2.40.70.10:FF:000024">
    <property type="entry name" value="Endothiapepsin"/>
    <property type="match status" value="1"/>
</dbReference>
<dbReference type="FunFam" id="2.40.70.10:FF:000026">
    <property type="entry name" value="Endothiapepsin"/>
    <property type="match status" value="1"/>
</dbReference>
<dbReference type="Gene3D" id="2.40.70.10">
    <property type="entry name" value="Acid Proteases"/>
    <property type="match status" value="2"/>
</dbReference>
<dbReference type="InterPro" id="IPR001461">
    <property type="entry name" value="Aspartic_peptidase_A1"/>
</dbReference>
<dbReference type="InterPro" id="IPR001969">
    <property type="entry name" value="Aspartic_peptidase_AS"/>
</dbReference>
<dbReference type="InterPro" id="IPR034163">
    <property type="entry name" value="Aspergillopepsin-like_cat_dom"/>
</dbReference>
<dbReference type="InterPro" id="IPR033121">
    <property type="entry name" value="PEPTIDASE_A1"/>
</dbReference>
<dbReference type="InterPro" id="IPR021109">
    <property type="entry name" value="Peptidase_aspartic_dom_sf"/>
</dbReference>
<dbReference type="PANTHER" id="PTHR47966:SF2">
    <property type="entry name" value="ASPERGILLOPEPSIN-1-RELATED"/>
    <property type="match status" value="1"/>
</dbReference>
<dbReference type="PANTHER" id="PTHR47966">
    <property type="entry name" value="BETA-SITE APP-CLEAVING ENZYME, ISOFORM A-RELATED"/>
    <property type="match status" value="1"/>
</dbReference>
<dbReference type="Pfam" id="PF00026">
    <property type="entry name" value="Asp"/>
    <property type="match status" value="1"/>
</dbReference>
<dbReference type="PRINTS" id="PR00792">
    <property type="entry name" value="PEPSIN"/>
</dbReference>
<dbReference type="SUPFAM" id="SSF50630">
    <property type="entry name" value="Acid proteases"/>
    <property type="match status" value="1"/>
</dbReference>
<dbReference type="PROSITE" id="PS00141">
    <property type="entry name" value="ASP_PROTEASE"/>
    <property type="match status" value="2"/>
</dbReference>
<dbReference type="PROSITE" id="PS51767">
    <property type="entry name" value="PEPTIDASE_A1"/>
    <property type="match status" value="1"/>
</dbReference>
<accession>Q9HEZ3</accession>
<sequence>MVSFTQLQLAFLGLSALGAAVPVTGTSEKKTFSLNQVKVAGTKTKNPAEHYANALRKYGAEVPSHVLAAAAATGSVTTSPTEFDSEYLTPIDVGGTTMNLDIDTGSSDLWVFSKELPSSETSGHAVYSPSSQSQLLNGYSWSISYGDGSSASGNVYLDYVTVGGVTASSQAVEAAETISSEFQQDPSDGLMGLAFSSINTVQPESQSTFFDNVQSNLASPVFCADLKYEAPGVYDFGFIDSSKHTGSVTYTPVDNSQGFWGFTASGYAVGSGSTVSTSISGIADTGTTLLLLPSSIVKKYYAQVKGSSNSATYGGYVFPCSATLPKFTVVINGYKAVIAAQYLNYSPVETGSSTCFGGIQSDTGIGFSIFGDIFLKSQYVVFDASGPRLGFAPQ</sequence>
<reference key="1">
    <citation type="submission" date="2000-08" db="EMBL/GenBank/DDBJ databases">
        <title>A DNA containing the gene for prepropenicillopepsin-JT3, the precursor for an aspartic proteinase from Penicillium janthinellum.</title>
        <authorList>
            <person name="Kuo K.H.M."/>
            <person name="Cao Q.-N."/>
            <person name="Tu G.-C."/>
            <person name="Lewis P.N."/>
            <person name="Pai E.F."/>
            <person name="Hofmann T."/>
        </authorList>
    </citation>
    <scope>NUCLEOTIDE SEQUENCE [GENOMIC DNA]</scope>
    <source>
        <strain>NRRL905</strain>
    </source>
</reference>